<keyword id="KW-0021">Allosteric enzyme</keyword>
<keyword id="KW-0963">Cytoplasm</keyword>
<keyword id="KW-0520">NAD</keyword>
<keyword id="KW-0560">Oxidoreductase</keyword>
<keyword id="KW-0597">Phosphoprotein</keyword>
<keyword id="KW-1185">Reference proteome</keyword>
<reference key="1">
    <citation type="journal article" date="2003" name="Science">
        <title>Role of mobile DNA in the evolution of vancomycin-resistant Enterococcus faecalis.</title>
        <authorList>
            <person name="Paulsen I.T."/>
            <person name="Banerjei L."/>
            <person name="Myers G.S.A."/>
            <person name="Nelson K.E."/>
            <person name="Seshadri R."/>
            <person name="Read T.D."/>
            <person name="Fouts D.E."/>
            <person name="Eisen J.A."/>
            <person name="Gill S.R."/>
            <person name="Heidelberg J.F."/>
            <person name="Tettelin H."/>
            <person name="Dodson R.J."/>
            <person name="Umayam L.A."/>
            <person name="Brinkac L.M."/>
            <person name="Beanan M.J."/>
            <person name="Daugherty S.C."/>
            <person name="DeBoy R.T."/>
            <person name="Durkin S.A."/>
            <person name="Kolonay J.F."/>
            <person name="Madupu R."/>
            <person name="Nelson W.C."/>
            <person name="Vamathevan J.J."/>
            <person name="Tran B."/>
            <person name="Upton J."/>
            <person name="Hansen T."/>
            <person name="Shetty J."/>
            <person name="Khouri H.M."/>
            <person name="Utterback T.R."/>
            <person name="Radune D."/>
            <person name="Ketchum K.A."/>
            <person name="Dougherty B.A."/>
            <person name="Fraser C.M."/>
        </authorList>
    </citation>
    <scope>NUCLEOTIDE SEQUENCE [LARGE SCALE GENOMIC DNA]</scope>
    <source>
        <strain>ATCC 700802 / V583</strain>
    </source>
</reference>
<accession>Q838C9</accession>
<dbReference type="EC" id="1.1.1.27" evidence="1"/>
<dbReference type="EMBL" id="AE016830">
    <property type="protein sequence ID" value="AAO80466.1"/>
    <property type="molecule type" value="Genomic_DNA"/>
</dbReference>
<dbReference type="RefSeq" id="NP_814395.1">
    <property type="nucleotide sequence ID" value="NC_004668.1"/>
</dbReference>
<dbReference type="RefSeq" id="WP_002358635.1">
    <property type="nucleotide sequence ID" value="NZ_KE136527.1"/>
</dbReference>
<dbReference type="SMR" id="Q838C9"/>
<dbReference type="STRING" id="226185.EF_0641"/>
<dbReference type="EnsemblBacteria" id="AAO80466">
    <property type="protein sequence ID" value="AAO80466"/>
    <property type="gene ID" value="EF_0641"/>
</dbReference>
<dbReference type="KEGG" id="efa:EF0641"/>
<dbReference type="PATRIC" id="fig|226185.45.peg.2583"/>
<dbReference type="eggNOG" id="COG0039">
    <property type="taxonomic scope" value="Bacteria"/>
</dbReference>
<dbReference type="HOGENOM" id="CLU_045401_1_1_9"/>
<dbReference type="SABIO-RK" id="Q838C9"/>
<dbReference type="UniPathway" id="UPA00554">
    <property type="reaction ID" value="UER00611"/>
</dbReference>
<dbReference type="PHI-base" id="PHI:4140"/>
<dbReference type="Proteomes" id="UP000001415">
    <property type="component" value="Chromosome"/>
</dbReference>
<dbReference type="GO" id="GO:0005737">
    <property type="term" value="C:cytoplasm"/>
    <property type="evidence" value="ECO:0007669"/>
    <property type="project" value="UniProtKB-SubCell"/>
</dbReference>
<dbReference type="GO" id="GO:0004459">
    <property type="term" value="F:L-lactate dehydrogenase activity"/>
    <property type="evidence" value="ECO:0007669"/>
    <property type="project" value="UniProtKB-UniRule"/>
</dbReference>
<dbReference type="GO" id="GO:0006096">
    <property type="term" value="P:glycolytic process"/>
    <property type="evidence" value="ECO:0007669"/>
    <property type="project" value="UniProtKB-UniRule"/>
</dbReference>
<dbReference type="GO" id="GO:0006089">
    <property type="term" value="P:lactate metabolic process"/>
    <property type="evidence" value="ECO:0007669"/>
    <property type="project" value="TreeGrafter"/>
</dbReference>
<dbReference type="CDD" id="cd05291">
    <property type="entry name" value="HicDH_like"/>
    <property type="match status" value="1"/>
</dbReference>
<dbReference type="FunFam" id="3.40.50.720:FF:000018">
    <property type="entry name" value="Malate dehydrogenase"/>
    <property type="match status" value="1"/>
</dbReference>
<dbReference type="Gene3D" id="3.90.110.10">
    <property type="entry name" value="Lactate dehydrogenase/glycoside hydrolase, family 4, C-terminal"/>
    <property type="match status" value="1"/>
</dbReference>
<dbReference type="Gene3D" id="3.40.50.720">
    <property type="entry name" value="NAD(P)-binding Rossmann-like Domain"/>
    <property type="match status" value="1"/>
</dbReference>
<dbReference type="HAMAP" id="MF_00488">
    <property type="entry name" value="Lactate_dehydrog"/>
    <property type="match status" value="1"/>
</dbReference>
<dbReference type="InterPro" id="IPR001557">
    <property type="entry name" value="L-lactate/malate_DH"/>
</dbReference>
<dbReference type="InterPro" id="IPR011304">
    <property type="entry name" value="L-lactate_DH"/>
</dbReference>
<dbReference type="InterPro" id="IPR018177">
    <property type="entry name" value="L-lactate_DH_AS"/>
</dbReference>
<dbReference type="InterPro" id="IPR022383">
    <property type="entry name" value="Lactate/malate_DH_C"/>
</dbReference>
<dbReference type="InterPro" id="IPR001236">
    <property type="entry name" value="Lactate/malate_DH_N"/>
</dbReference>
<dbReference type="InterPro" id="IPR015955">
    <property type="entry name" value="Lactate_DH/Glyco_Ohase_4_C"/>
</dbReference>
<dbReference type="InterPro" id="IPR036291">
    <property type="entry name" value="NAD(P)-bd_dom_sf"/>
</dbReference>
<dbReference type="NCBIfam" id="TIGR01771">
    <property type="entry name" value="L-LDH-NAD"/>
    <property type="match status" value="1"/>
</dbReference>
<dbReference type="NCBIfam" id="NF000824">
    <property type="entry name" value="PRK00066.1"/>
    <property type="match status" value="1"/>
</dbReference>
<dbReference type="NCBIfam" id="NF004863">
    <property type="entry name" value="PRK06223.1"/>
    <property type="match status" value="1"/>
</dbReference>
<dbReference type="PANTHER" id="PTHR43128">
    <property type="entry name" value="L-2-HYDROXYCARBOXYLATE DEHYDROGENASE (NAD(P)(+))"/>
    <property type="match status" value="1"/>
</dbReference>
<dbReference type="PANTHER" id="PTHR43128:SF16">
    <property type="entry name" value="L-LACTATE DEHYDROGENASE"/>
    <property type="match status" value="1"/>
</dbReference>
<dbReference type="Pfam" id="PF02866">
    <property type="entry name" value="Ldh_1_C"/>
    <property type="match status" value="1"/>
</dbReference>
<dbReference type="Pfam" id="PF00056">
    <property type="entry name" value="Ldh_1_N"/>
    <property type="match status" value="1"/>
</dbReference>
<dbReference type="PIRSF" id="PIRSF000102">
    <property type="entry name" value="Lac_mal_DH"/>
    <property type="match status" value="1"/>
</dbReference>
<dbReference type="PRINTS" id="PR00086">
    <property type="entry name" value="LLDHDRGNASE"/>
</dbReference>
<dbReference type="SUPFAM" id="SSF56327">
    <property type="entry name" value="LDH C-terminal domain-like"/>
    <property type="match status" value="1"/>
</dbReference>
<dbReference type="SUPFAM" id="SSF51735">
    <property type="entry name" value="NAD(P)-binding Rossmann-fold domains"/>
    <property type="match status" value="1"/>
</dbReference>
<dbReference type="PROSITE" id="PS00064">
    <property type="entry name" value="L_LDH"/>
    <property type="match status" value="1"/>
</dbReference>
<feature type="chain" id="PRO_0000168344" description="L-lactate dehydrogenase 2">
    <location>
        <begin position="1"/>
        <end position="317"/>
    </location>
</feature>
<feature type="active site" description="Proton acceptor" evidence="1">
    <location>
        <position position="178"/>
    </location>
</feature>
<feature type="binding site" evidence="1">
    <location>
        <position position="16"/>
    </location>
    <ligand>
        <name>NAD(+)</name>
        <dbReference type="ChEBI" id="CHEBI:57540"/>
    </ligand>
</feature>
<feature type="binding site" evidence="1">
    <location>
        <position position="37"/>
    </location>
    <ligand>
        <name>NAD(+)</name>
        <dbReference type="ChEBI" id="CHEBI:57540"/>
    </ligand>
</feature>
<feature type="binding site" evidence="1">
    <location>
        <position position="42"/>
    </location>
    <ligand>
        <name>NAD(+)</name>
        <dbReference type="ChEBI" id="CHEBI:57540"/>
    </ligand>
</feature>
<feature type="binding site" evidence="1">
    <location>
        <position position="68"/>
    </location>
    <ligand>
        <name>NAD(+)</name>
        <dbReference type="ChEBI" id="CHEBI:57540"/>
    </ligand>
</feature>
<feature type="binding site" evidence="1">
    <location>
        <begin position="82"/>
        <end position="83"/>
    </location>
    <ligand>
        <name>NAD(+)</name>
        <dbReference type="ChEBI" id="CHEBI:57540"/>
    </ligand>
</feature>
<feature type="binding site" evidence="1">
    <location>
        <position position="85"/>
    </location>
    <ligand>
        <name>substrate</name>
    </ligand>
</feature>
<feature type="binding site" evidence="1">
    <location>
        <position position="91"/>
    </location>
    <ligand>
        <name>substrate</name>
    </ligand>
</feature>
<feature type="binding site" evidence="1">
    <location>
        <position position="104"/>
    </location>
    <ligand>
        <name>NAD(+)</name>
        <dbReference type="ChEBI" id="CHEBI:57540"/>
    </ligand>
</feature>
<feature type="binding site" evidence="1">
    <location>
        <begin position="121"/>
        <end position="123"/>
    </location>
    <ligand>
        <name>NAD(+)</name>
        <dbReference type="ChEBI" id="CHEBI:57540"/>
    </ligand>
</feature>
<feature type="binding site" evidence="1">
    <location>
        <begin position="123"/>
        <end position="126"/>
    </location>
    <ligand>
        <name>substrate</name>
    </ligand>
</feature>
<feature type="binding site" evidence="1">
    <location>
        <position position="146"/>
    </location>
    <ligand>
        <name>NAD(+)</name>
        <dbReference type="ChEBI" id="CHEBI:57540"/>
    </ligand>
</feature>
<feature type="binding site" evidence="1">
    <location>
        <begin position="151"/>
        <end position="154"/>
    </location>
    <ligand>
        <name>substrate</name>
    </ligand>
</feature>
<feature type="binding site" evidence="1">
    <location>
        <position position="156"/>
    </location>
    <ligand>
        <name>beta-D-fructose 1,6-bisphosphate</name>
        <dbReference type="ChEBI" id="CHEBI:32966"/>
        <note>allosteric activator</note>
    </ligand>
</feature>
<feature type="binding site" evidence="1">
    <location>
        <position position="171"/>
    </location>
    <ligand>
        <name>beta-D-fructose 1,6-bisphosphate</name>
        <dbReference type="ChEBI" id="CHEBI:32966"/>
        <note>allosteric activator</note>
    </ligand>
</feature>
<feature type="binding site" evidence="1">
    <location>
        <position position="232"/>
    </location>
    <ligand>
        <name>substrate</name>
    </ligand>
</feature>
<feature type="modified residue" description="Phosphotyrosine" evidence="1">
    <location>
        <position position="223"/>
    </location>
</feature>
<name>LDH2_ENTFA</name>
<sequence length="317" mass="34368">MKVFNKKVAIIGTGFVGTSIAYSMINQGIANELILVDIDKAKSEGEAIDLLDGVSWGQENVNVWAGDYQDCQDADIVVITAGANQKPGQSRLDLVSINAEIMKTIVNNIMKSGFDGILVIASNPVDVLTYVAWQASGLPVSRVIGTGTTLDTTRFRKELSQRLAIDPRNVHGYIIGEHGDSEVAVWSHTMIGTKPILEIVDTTERLTSDDLPIISDKVKNTAYEIIDRKQATYYGIGMSTARIVKAILNNEQAILPVSAYLDGQYGQQDVFTGIPAVVGNQGVTDIIELNLNAAEKELFQKSVTQLKQVMASLQPNA</sequence>
<proteinExistence type="inferred from homology"/>
<comment type="function">
    <text evidence="1">Catalyzes the conversion of lactate to pyruvate.</text>
</comment>
<comment type="catalytic activity">
    <reaction evidence="1">
        <text>(S)-lactate + NAD(+) = pyruvate + NADH + H(+)</text>
        <dbReference type="Rhea" id="RHEA:23444"/>
        <dbReference type="ChEBI" id="CHEBI:15361"/>
        <dbReference type="ChEBI" id="CHEBI:15378"/>
        <dbReference type="ChEBI" id="CHEBI:16651"/>
        <dbReference type="ChEBI" id="CHEBI:57540"/>
        <dbReference type="ChEBI" id="CHEBI:57945"/>
        <dbReference type="EC" id="1.1.1.27"/>
    </reaction>
</comment>
<comment type="activity regulation">
    <text evidence="1">Allosterically activated by fructose 1,6-bisphosphate (FBP).</text>
</comment>
<comment type="pathway">
    <text evidence="1">Fermentation; pyruvate fermentation to lactate; (S)-lactate from pyruvate: step 1/1.</text>
</comment>
<comment type="subunit">
    <text evidence="1">Homotetramer.</text>
</comment>
<comment type="subcellular location">
    <subcellularLocation>
        <location evidence="1">Cytoplasm</location>
    </subcellularLocation>
</comment>
<comment type="similarity">
    <text evidence="1">Belongs to the LDH/MDH superfamily. LDH family.</text>
</comment>
<gene>
    <name evidence="1" type="primary">ldh2</name>
    <name type="synonym">ldh-2</name>
    <name type="ordered locus">EF_0641</name>
</gene>
<organism>
    <name type="scientific">Enterococcus faecalis (strain ATCC 700802 / V583)</name>
    <dbReference type="NCBI Taxonomy" id="226185"/>
    <lineage>
        <taxon>Bacteria</taxon>
        <taxon>Bacillati</taxon>
        <taxon>Bacillota</taxon>
        <taxon>Bacilli</taxon>
        <taxon>Lactobacillales</taxon>
        <taxon>Enterococcaceae</taxon>
        <taxon>Enterococcus</taxon>
    </lineage>
</organism>
<protein>
    <recommendedName>
        <fullName evidence="1">L-lactate dehydrogenase 2</fullName>
        <shortName evidence="1">L-LDH 2</shortName>
        <ecNumber evidence="1">1.1.1.27</ecNumber>
    </recommendedName>
</protein>
<evidence type="ECO:0000255" key="1">
    <source>
        <dbReference type="HAMAP-Rule" id="MF_00488"/>
    </source>
</evidence>